<evidence type="ECO:0000255" key="1">
    <source>
        <dbReference type="HAMAP-Rule" id="MF_01014"/>
    </source>
</evidence>
<organism>
    <name type="scientific">Syntrophotalea carbinolica (strain DSM 2380 / NBRC 103641 / GraBd1)</name>
    <name type="common">Pelobacter carbinolicus</name>
    <dbReference type="NCBI Taxonomy" id="338963"/>
    <lineage>
        <taxon>Bacteria</taxon>
        <taxon>Pseudomonadati</taxon>
        <taxon>Thermodesulfobacteriota</taxon>
        <taxon>Desulfuromonadia</taxon>
        <taxon>Desulfuromonadales</taxon>
        <taxon>Syntrophotaleaceae</taxon>
        <taxon>Syntrophotalea</taxon>
    </lineage>
</organism>
<sequence>MIVIPAIDLKEGRCVRLEQGLMEKDTVYNDNPGAQARSWQEQGGELLHIVDLDGAFAGVPRNRDAIRAIAEAVSIPTELGGGIRDLPTIEAYLELGIDRVILGTVAKENPELVREACRLFPGRIVVGIDARDGLVAVRGWADVTEKLATELAKEMEGFGVEAIIYTDIARDGMMGGPNLEATRALAESISVPVIASGGVSCLEDIARLMTIEDSGVTGVITGKALYTGSLDLREAVALTKGKA</sequence>
<name>HIS4_SYNC1</name>
<reference key="1">
    <citation type="submission" date="2005-10" db="EMBL/GenBank/DDBJ databases">
        <title>Complete sequence of Pelobacter carbinolicus DSM 2380.</title>
        <authorList>
            <person name="Copeland A."/>
            <person name="Lucas S."/>
            <person name="Lapidus A."/>
            <person name="Barry K."/>
            <person name="Detter J.C."/>
            <person name="Glavina T."/>
            <person name="Hammon N."/>
            <person name="Israni S."/>
            <person name="Pitluck S."/>
            <person name="Chertkov O."/>
            <person name="Schmutz J."/>
            <person name="Larimer F."/>
            <person name="Land M."/>
            <person name="Kyrpides N."/>
            <person name="Ivanova N."/>
            <person name="Richardson P."/>
        </authorList>
    </citation>
    <scope>NUCLEOTIDE SEQUENCE [LARGE SCALE GENOMIC DNA]</scope>
    <source>
        <strain>DSM 2380 / NBRC 103641 / GraBd1</strain>
    </source>
</reference>
<comment type="catalytic activity">
    <reaction evidence="1">
        <text>1-(5-phospho-beta-D-ribosyl)-5-[(5-phospho-beta-D-ribosylamino)methylideneamino]imidazole-4-carboxamide = 5-[(5-phospho-1-deoxy-D-ribulos-1-ylimino)methylamino]-1-(5-phospho-beta-D-ribosyl)imidazole-4-carboxamide</text>
        <dbReference type="Rhea" id="RHEA:15469"/>
        <dbReference type="ChEBI" id="CHEBI:58435"/>
        <dbReference type="ChEBI" id="CHEBI:58525"/>
        <dbReference type="EC" id="5.3.1.16"/>
    </reaction>
</comment>
<comment type="pathway">
    <text evidence="1">Amino-acid biosynthesis; L-histidine biosynthesis; L-histidine from 5-phospho-alpha-D-ribose 1-diphosphate: step 4/9.</text>
</comment>
<comment type="subcellular location">
    <subcellularLocation>
        <location evidence="1">Cytoplasm</location>
    </subcellularLocation>
</comment>
<comment type="similarity">
    <text evidence="1">Belongs to the HisA/HisF family.</text>
</comment>
<keyword id="KW-0028">Amino-acid biosynthesis</keyword>
<keyword id="KW-0963">Cytoplasm</keyword>
<keyword id="KW-0368">Histidine biosynthesis</keyword>
<keyword id="KW-0413">Isomerase</keyword>
<keyword id="KW-1185">Reference proteome</keyword>
<dbReference type="EC" id="5.3.1.16" evidence="1"/>
<dbReference type="EMBL" id="CP000142">
    <property type="protein sequence ID" value="ABA89921.1"/>
    <property type="molecule type" value="Genomic_DNA"/>
</dbReference>
<dbReference type="RefSeq" id="WP_011342464.1">
    <property type="nucleotide sequence ID" value="NC_007498.2"/>
</dbReference>
<dbReference type="SMR" id="Q3A136"/>
<dbReference type="STRING" id="338963.Pcar_2685"/>
<dbReference type="KEGG" id="pca:Pcar_2685"/>
<dbReference type="eggNOG" id="COG0106">
    <property type="taxonomic scope" value="Bacteria"/>
</dbReference>
<dbReference type="HOGENOM" id="CLU_048577_1_1_7"/>
<dbReference type="OrthoDB" id="9807749at2"/>
<dbReference type="UniPathway" id="UPA00031">
    <property type="reaction ID" value="UER00009"/>
</dbReference>
<dbReference type="Proteomes" id="UP000002534">
    <property type="component" value="Chromosome"/>
</dbReference>
<dbReference type="GO" id="GO:0005737">
    <property type="term" value="C:cytoplasm"/>
    <property type="evidence" value="ECO:0007669"/>
    <property type="project" value="UniProtKB-SubCell"/>
</dbReference>
<dbReference type="GO" id="GO:0003949">
    <property type="term" value="F:1-(5-phosphoribosyl)-5-[(5-phosphoribosylamino)methylideneamino]imidazole-4-carboxamide isomerase activity"/>
    <property type="evidence" value="ECO:0007669"/>
    <property type="project" value="UniProtKB-UniRule"/>
</dbReference>
<dbReference type="GO" id="GO:0000105">
    <property type="term" value="P:L-histidine biosynthetic process"/>
    <property type="evidence" value="ECO:0007669"/>
    <property type="project" value="UniProtKB-UniRule"/>
</dbReference>
<dbReference type="GO" id="GO:0000162">
    <property type="term" value="P:L-tryptophan biosynthetic process"/>
    <property type="evidence" value="ECO:0007669"/>
    <property type="project" value="TreeGrafter"/>
</dbReference>
<dbReference type="CDD" id="cd04732">
    <property type="entry name" value="HisA"/>
    <property type="match status" value="1"/>
</dbReference>
<dbReference type="FunFam" id="3.20.20.70:FF:000009">
    <property type="entry name" value="1-(5-phosphoribosyl)-5-[(5-phosphoribosylamino)methylideneamino] imidazole-4-carboxamide isomerase"/>
    <property type="match status" value="1"/>
</dbReference>
<dbReference type="Gene3D" id="3.20.20.70">
    <property type="entry name" value="Aldolase class I"/>
    <property type="match status" value="1"/>
</dbReference>
<dbReference type="HAMAP" id="MF_01014">
    <property type="entry name" value="HisA"/>
    <property type="match status" value="1"/>
</dbReference>
<dbReference type="InterPro" id="IPR013785">
    <property type="entry name" value="Aldolase_TIM"/>
</dbReference>
<dbReference type="InterPro" id="IPR006062">
    <property type="entry name" value="His_biosynth"/>
</dbReference>
<dbReference type="InterPro" id="IPR006063">
    <property type="entry name" value="HisA_bact_arch"/>
</dbReference>
<dbReference type="InterPro" id="IPR044524">
    <property type="entry name" value="Isoase_HisA-like"/>
</dbReference>
<dbReference type="InterPro" id="IPR023016">
    <property type="entry name" value="Isoase_HisA-like_bact"/>
</dbReference>
<dbReference type="InterPro" id="IPR011060">
    <property type="entry name" value="RibuloseP-bd_barrel"/>
</dbReference>
<dbReference type="NCBIfam" id="TIGR00007">
    <property type="entry name" value="1-(5-phosphoribosyl)-5-[(5-phosphoribosylamino)methylideneamino]imidazole-4-carboxamide isomerase"/>
    <property type="match status" value="1"/>
</dbReference>
<dbReference type="PANTHER" id="PTHR43090">
    <property type="entry name" value="1-(5-PHOSPHORIBOSYL)-5-[(5-PHOSPHORIBOSYLAMINO)METHYLIDENEAMINO] IMIDAZOLE-4-CARBOXAMIDE ISOMERASE"/>
    <property type="match status" value="1"/>
</dbReference>
<dbReference type="PANTHER" id="PTHR43090:SF2">
    <property type="entry name" value="1-(5-PHOSPHORIBOSYL)-5-[(5-PHOSPHORIBOSYLAMINO)METHYLIDENEAMINO] IMIDAZOLE-4-CARBOXAMIDE ISOMERASE"/>
    <property type="match status" value="1"/>
</dbReference>
<dbReference type="Pfam" id="PF00977">
    <property type="entry name" value="His_biosynth"/>
    <property type="match status" value="1"/>
</dbReference>
<dbReference type="SUPFAM" id="SSF51366">
    <property type="entry name" value="Ribulose-phoshate binding barrel"/>
    <property type="match status" value="1"/>
</dbReference>
<accession>Q3A136</accession>
<feature type="chain" id="PRO_0000229067" description="1-(5-phosphoribosyl)-5-[(5-phosphoribosylamino)methylideneamino] imidazole-4-carboxamide isomerase">
    <location>
        <begin position="1"/>
        <end position="243"/>
    </location>
</feature>
<feature type="active site" description="Proton acceptor" evidence="1">
    <location>
        <position position="8"/>
    </location>
</feature>
<feature type="active site" description="Proton donor" evidence="1">
    <location>
        <position position="129"/>
    </location>
</feature>
<protein>
    <recommendedName>
        <fullName evidence="1">1-(5-phosphoribosyl)-5-[(5-phosphoribosylamino)methylideneamino] imidazole-4-carboxamide isomerase</fullName>
        <ecNumber evidence="1">5.3.1.16</ecNumber>
    </recommendedName>
    <alternativeName>
        <fullName evidence="1">Phosphoribosylformimino-5-aminoimidazole carboxamide ribotide isomerase</fullName>
    </alternativeName>
</protein>
<gene>
    <name evidence="1" type="primary">hisA</name>
    <name type="ordered locus">Pcar_2685</name>
</gene>
<proteinExistence type="inferred from homology"/>